<sequence>MELVFIRHGFSEWNAKNLFTGWRDVNLTERGVEEAKAAGKKLLDKGYEFDIAFTSVLTRAIKTCNIVLEESHQLWIPQVKNWRLNERHYGALQGLDKKATAEQYGDEQVHIWRRSYDISPPDLDPQDPNSAHNDRRYANIPSDVVPNAENLKLTLERALPFWEDQIAPAMLSGKRVLVVAHGNSLRALAKHIIGISDAEIMDFEIPTGQPLVLKLDDKLNYVEHYYL</sequence>
<organism>
    <name type="scientific">Haemophilus influenzae (strain PittEE)</name>
    <dbReference type="NCBI Taxonomy" id="374930"/>
    <lineage>
        <taxon>Bacteria</taxon>
        <taxon>Pseudomonadati</taxon>
        <taxon>Pseudomonadota</taxon>
        <taxon>Gammaproteobacteria</taxon>
        <taxon>Pasteurellales</taxon>
        <taxon>Pasteurellaceae</taxon>
        <taxon>Haemophilus</taxon>
    </lineage>
</organism>
<feature type="chain" id="PRO_1000064062" description="2,3-bisphosphoglycerate-dependent phosphoglycerate mutase">
    <location>
        <begin position="1"/>
        <end position="227"/>
    </location>
</feature>
<feature type="active site" description="Tele-phosphohistidine intermediate" evidence="1">
    <location>
        <position position="8"/>
    </location>
</feature>
<feature type="active site" description="Proton donor/acceptor" evidence="1">
    <location>
        <position position="86"/>
    </location>
</feature>
<feature type="binding site" evidence="1">
    <location>
        <begin position="7"/>
        <end position="14"/>
    </location>
    <ligand>
        <name>substrate</name>
    </ligand>
</feature>
<feature type="binding site" evidence="1">
    <location>
        <begin position="20"/>
        <end position="21"/>
    </location>
    <ligand>
        <name>substrate</name>
    </ligand>
</feature>
<feature type="binding site" evidence="1">
    <location>
        <position position="59"/>
    </location>
    <ligand>
        <name>substrate</name>
    </ligand>
</feature>
<feature type="binding site" evidence="1">
    <location>
        <begin position="86"/>
        <end position="89"/>
    </location>
    <ligand>
        <name>substrate</name>
    </ligand>
</feature>
<feature type="binding site" evidence="1">
    <location>
        <position position="97"/>
    </location>
    <ligand>
        <name>substrate</name>
    </ligand>
</feature>
<feature type="binding site" evidence="1">
    <location>
        <begin position="113"/>
        <end position="114"/>
    </location>
    <ligand>
        <name>substrate</name>
    </ligand>
</feature>
<feature type="binding site" evidence="1">
    <location>
        <begin position="182"/>
        <end position="183"/>
    </location>
    <ligand>
        <name>substrate</name>
    </ligand>
</feature>
<feature type="site" description="Transition state stabilizer" evidence="1">
    <location>
        <position position="181"/>
    </location>
</feature>
<dbReference type="EC" id="5.4.2.11" evidence="1"/>
<dbReference type="EMBL" id="CP000671">
    <property type="protein sequence ID" value="ABQ98969.1"/>
    <property type="molecule type" value="Genomic_DNA"/>
</dbReference>
<dbReference type="SMR" id="A5UDW8"/>
<dbReference type="KEGG" id="hip:CGSHiEE_08310"/>
<dbReference type="HOGENOM" id="CLU_033323_1_5_6"/>
<dbReference type="UniPathway" id="UPA00109">
    <property type="reaction ID" value="UER00186"/>
</dbReference>
<dbReference type="GO" id="GO:0004619">
    <property type="term" value="F:phosphoglycerate mutase activity"/>
    <property type="evidence" value="ECO:0007669"/>
    <property type="project" value="UniProtKB-EC"/>
</dbReference>
<dbReference type="GO" id="GO:0006094">
    <property type="term" value="P:gluconeogenesis"/>
    <property type="evidence" value="ECO:0007669"/>
    <property type="project" value="UniProtKB-UniRule"/>
</dbReference>
<dbReference type="GO" id="GO:0006096">
    <property type="term" value="P:glycolytic process"/>
    <property type="evidence" value="ECO:0007669"/>
    <property type="project" value="UniProtKB-UniRule"/>
</dbReference>
<dbReference type="CDD" id="cd07067">
    <property type="entry name" value="HP_PGM_like"/>
    <property type="match status" value="1"/>
</dbReference>
<dbReference type="FunFam" id="3.40.50.1240:FF:000003">
    <property type="entry name" value="2,3-bisphosphoglycerate-dependent phosphoglycerate mutase"/>
    <property type="match status" value="1"/>
</dbReference>
<dbReference type="Gene3D" id="3.40.50.1240">
    <property type="entry name" value="Phosphoglycerate mutase-like"/>
    <property type="match status" value="1"/>
</dbReference>
<dbReference type="HAMAP" id="MF_01039">
    <property type="entry name" value="PGAM_GpmA"/>
    <property type="match status" value="1"/>
</dbReference>
<dbReference type="InterPro" id="IPR013078">
    <property type="entry name" value="His_Pase_superF_clade-1"/>
</dbReference>
<dbReference type="InterPro" id="IPR029033">
    <property type="entry name" value="His_PPase_superfam"/>
</dbReference>
<dbReference type="InterPro" id="IPR005952">
    <property type="entry name" value="Phosphogly_mut1"/>
</dbReference>
<dbReference type="NCBIfam" id="TIGR01258">
    <property type="entry name" value="pgm_1"/>
    <property type="match status" value="1"/>
</dbReference>
<dbReference type="NCBIfam" id="NF010713">
    <property type="entry name" value="PRK14115.1"/>
    <property type="match status" value="1"/>
</dbReference>
<dbReference type="NCBIfam" id="NF010716">
    <property type="entry name" value="PRK14118.1"/>
    <property type="match status" value="1"/>
</dbReference>
<dbReference type="PANTHER" id="PTHR11931">
    <property type="entry name" value="PHOSPHOGLYCERATE MUTASE"/>
    <property type="match status" value="1"/>
</dbReference>
<dbReference type="Pfam" id="PF00300">
    <property type="entry name" value="His_Phos_1"/>
    <property type="match status" value="2"/>
</dbReference>
<dbReference type="PIRSF" id="PIRSF000709">
    <property type="entry name" value="6PFK_2-Ptase"/>
    <property type="match status" value="1"/>
</dbReference>
<dbReference type="SMART" id="SM00855">
    <property type="entry name" value="PGAM"/>
    <property type="match status" value="1"/>
</dbReference>
<dbReference type="SUPFAM" id="SSF53254">
    <property type="entry name" value="Phosphoglycerate mutase-like"/>
    <property type="match status" value="1"/>
</dbReference>
<name>GPMA_HAEIE</name>
<comment type="function">
    <text evidence="1">Catalyzes the interconversion of 2-phosphoglycerate and 3-phosphoglycerate.</text>
</comment>
<comment type="catalytic activity">
    <reaction evidence="1">
        <text>(2R)-2-phosphoglycerate = (2R)-3-phosphoglycerate</text>
        <dbReference type="Rhea" id="RHEA:15901"/>
        <dbReference type="ChEBI" id="CHEBI:58272"/>
        <dbReference type="ChEBI" id="CHEBI:58289"/>
        <dbReference type="EC" id="5.4.2.11"/>
    </reaction>
</comment>
<comment type="pathway">
    <text evidence="1">Carbohydrate degradation; glycolysis; pyruvate from D-glyceraldehyde 3-phosphate: step 3/5.</text>
</comment>
<comment type="subunit">
    <text evidence="1">Homodimer.</text>
</comment>
<comment type="similarity">
    <text evidence="1">Belongs to the phosphoglycerate mutase family. BPG-dependent PGAM subfamily.</text>
</comment>
<accession>A5UDW8</accession>
<keyword id="KW-0312">Gluconeogenesis</keyword>
<keyword id="KW-0324">Glycolysis</keyword>
<keyword id="KW-0413">Isomerase</keyword>
<gene>
    <name evidence="1" type="primary">gpmA</name>
    <name type="ordered locus">CGSHiEE_08310</name>
</gene>
<evidence type="ECO:0000255" key="1">
    <source>
        <dbReference type="HAMAP-Rule" id="MF_01039"/>
    </source>
</evidence>
<reference key="1">
    <citation type="journal article" date="2007" name="Genome Biol.">
        <title>Characterization and modeling of the Haemophilus influenzae core and supragenomes based on the complete genomic sequences of Rd and 12 clinical nontypeable strains.</title>
        <authorList>
            <person name="Hogg J.S."/>
            <person name="Hu F.Z."/>
            <person name="Janto B."/>
            <person name="Boissy R."/>
            <person name="Hayes J."/>
            <person name="Keefe R."/>
            <person name="Post J.C."/>
            <person name="Ehrlich G.D."/>
        </authorList>
    </citation>
    <scope>NUCLEOTIDE SEQUENCE [LARGE SCALE GENOMIC DNA]</scope>
    <source>
        <strain>PittEE</strain>
    </source>
</reference>
<protein>
    <recommendedName>
        <fullName evidence="1">2,3-bisphosphoglycerate-dependent phosphoglycerate mutase</fullName>
        <shortName evidence="1">BPG-dependent PGAM</shortName>
        <shortName evidence="1">PGAM</shortName>
        <shortName evidence="1">Phosphoglyceromutase</shortName>
        <shortName evidence="1">dPGM</shortName>
        <ecNumber evidence="1">5.4.2.11</ecNumber>
    </recommendedName>
</protein>
<proteinExistence type="inferred from homology"/>